<accession>Q5P794</accession>
<protein>
    <recommendedName>
        <fullName evidence="1">1-(5-phosphoribosyl)-5-[(5-phosphoribosylamino)methylideneamino] imidazole-4-carboxamide isomerase</fullName>
        <ecNumber evidence="1">5.3.1.16</ecNumber>
    </recommendedName>
    <alternativeName>
        <fullName evidence="1">Phosphoribosylformimino-5-aminoimidazole carboxamide ribotide isomerase</fullName>
    </alternativeName>
</protein>
<organism>
    <name type="scientific">Aromatoleum aromaticum (strain DSM 19018 / LMG 30748 / EbN1)</name>
    <name type="common">Azoarcus sp. (strain EbN1)</name>
    <dbReference type="NCBI Taxonomy" id="76114"/>
    <lineage>
        <taxon>Bacteria</taxon>
        <taxon>Pseudomonadati</taxon>
        <taxon>Pseudomonadota</taxon>
        <taxon>Betaproteobacteria</taxon>
        <taxon>Rhodocyclales</taxon>
        <taxon>Rhodocyclaceae</taxon>
        <taxon>Aromatoleum</taxon>
    </lineage>
</organism>
<sequence>MLLIPAIDLKDGHCVRLKQGEMDDATVFSEDPAAMARHWIEQGARRLHLVDLNGAFAGKPKNGAAIRSIVDEVGDDIPVQLGGGVRDLDTIEHYLDNGISYIIIGTAAVKNPGFLHDACGAFPGHIIVGLDARDGKVAVDGWSKMTGHDVVDLAKKYEDYGVEAVIYTDIGRDGMLSGVNVEATVRLAQALRIPVIASGGIASIADIDALCAVEAEGIMGAITGRAIYEGALDFAVAQARADELNGGEG</sequence>
<proteinExistence type="inferred from homology"/>
<dbReference type="EC" id="5.3.1.16" evidence="1"/>
<dbReference type="EMBL" id="CR555306">
    <property type="protein sequence ID" value="CAI06817.1"/>
    <property type="molecule type" value="Genomic_DNA"/>
</dbReference>
<dbReference type="RefSeq" id="WP_011236545.1">
    <property type="nucleotide sequence ID" value="NC_006513.1"/>
</dbReference>
<dbReference type="SMR" id="Q5P794"/>
<dbReference type="STRING" id="76114.ebA1293"/>
<dbReference type="KEGG" id="eba:ebA1293"/>
<dbReference type="eggNOG" id="COG0106">
    <property type="taxonomic scope" value="Bacteria"/>
</dbReference>
<dbReference type="HOGENOM" id="CLU_048577_1_1_4"/>
<dbReference type="OrthoDB" id="9807749at2"/>
<dbReference type="UniPathway" id="UPA00031">
    <property type="reaction ID" value="UER00009"/>
</dbReference>
<dbReference type="Proteomes" id="UP000006552">
    <property type="component" value="Chromosome"/>
</dbReference>
<dbReference type="GO" id="GO:0005737">
    <property type="term" value="C:cytoplasm"/>
    <property type="evidence" value="ECO:0007669"/>
    <property type="project" value="UniProtKB-SubCell"/>
</dbReference>
<dbReference type="GO" id="GO:0003949">
    <property type="term" value="F:1-(5-phosphoribosyl)-5-[(5-phosphoribosylamino)methylideneamino]imidazole-4-carboxamide isomerase activity"/>
    <property type="evidence" value="ECO:0007669"/>
    <property type="project" value="UniProtKB-UniRule"/>
</dbReference>
<dbReference type="GO" id="GO:0000105">
    <property type="term" value="P:L-histidine biosynthetic process"/>
    <property type="evidence" value="ECO:0007669"/>
    <property type="project" value="UniProtKB-UniRule"/>
</dbReference>
<dbReference type="GO" id="GO:0000162">
    <property type="term" value="P:L-tryptophan biosynthetic process"/>
    <property type="evidence" value="ECO:0007669"/>
    <property type="project" value="TreeGrafter"/>
</dbReference>
<dbReference type="CDD" id="cd04732">
    <property type="entry name" value="HisA"/>
    <property type="match status" value="1"/>
</dbReference>
<dbReference type="FunFam" id="3.20.20.70:FF:000009">
    <property type="entry name" value="1-(5-phosphoribosyl)-5-[(5-phosphoribosylamino)methylideneamino] imidazole-4-carboxamide isomerase"/>
    <property type="match status" value="1"/>
</dbReference>
<dbReference type="Gene3D" id="3.20.20.70">
    <property type="entry name" value="Aldolase class I"/>
    <property type="match status" value="1"/>
</dbReference>
<dbReference type="HAMAP" id="MF_01014">
    <property type="entry name" value="HisA"/>
    <property type="match status" value="1"/>
</dbReference>
<dbReference type="InterPro" id="IPR013785">
    <property type="entry name" value="Aldolase_TIM"/>
</dbReference>
<dbReference type="InterPro" id="IPR006062">
    <property type="entry name" value="His_biosynth"/>
</dbReference>
<dbReference type="InterPro" id="IPR006063">
    <property type="entry name" value="HisA_bact_arch"/>
</dbReference>
<dbReference type="InterPro" id="IPR044524">
    <property type="entry name" value="Isoase_HisA-like"/>
</dbReference>
<dbReference type="InterPro" id="IPR023016">
    <property type="entry name" value="Isoase_HisA-like_bact"/>
</dbReference>
<dbReference type="InterPro" id="IPR011060">
    <property type="entry name" value="RibuloseP-bd_barrel"/>
</dbReference>
<dbReference type="NCBIfam" id="TIGR00007">
    <property type="entry name" value="1-(5-phosphoribosyl)-5-[(5-phosphoribosylamino)methylideneamino]imidazole-4-carboxamide isomerase"/>
    <property type="match status" value="1"/>
</dbReference>
<dbReference type="NCBIfam" id="NF010112">
    <property type="entry name" value="PRK13585.1"/>
    <property type="match status" value="1"/>
</dbReference>
<dbReference type="PANTHER" id="PTHR43090">
    <property type="entry name" value="1-(5-PHOSPHORIBOSYL)-5-[(5-PHOSPHORIBOSYLAMINO)METHYLIDENEAMINO] IMIDAZOLE-4-CARBOXAMIDE ISOMERASE"/>
    <property type="match status" value="1"/>
</dbReference>
<dbReference type="PANTHER" id="PTHR43090:SF2">
    <property type="entry name" value="1-(5-PHOSPHORIBOSYL)-5-[(5-PHOSPHORIBOSYLAMINO)METHYLIDENEAMINO] IMIDAZOLE-4-CARBOXAMIDE ISOMERASE"/>
    <property type="match status" value="1"/>
</dbReference>
<dbReference type="Pfam" id="PF00977">
    <property type="entry name" value="His_biosynth"/>
    <property type="match status" value="1"/>
</dbReference>
<dbReference type="SUPFAM" id="SSF51366">
    <property type="entry name" value="Ribulose-phoshate binding barrel"/>
    <property type="match status" value="1"/>
</dbReference>
<evidence type="ECO:0000255" key="1">
    <source>
        <dbReference type="HAMAP-Rule" id="MF_01014"/>
    </source>
</evidence>
<gene>
    <name evidence="1" type="primary">hisA</name>
    <name type="ordered locus">AZOSEA06940</name>
    <name type="ORF">ebA1293</name>
</gene>
<keyword id="KW-0028">Amino-acid biosynthesis</keyword>
<keyword id="KW-0963">Cytoplasm</keyword>
<keyword id="KW-0368">Histidine biosynthesis</keyword>
<keyword id="KW-0413">Isomerase</keyword>
<keyword id="KW-1185">Reference proteome</keyword>
<comment type="catalytic activity">
    <reaction evidence="1">
        <text>1-(5-phospho-beta-D-ribosyl)-5-[(5-phospho-beta-D-ribosylamino)methylideneamino]imidazole-4-carboxamide = 5-[(5-phospho-1-deoxy-D-ribulos-1-ylimino)methylamino]-1-(5-phospho-beta-D-ribosyl)imidazole-4-carboxamide</text>
        <dbReference type="Rhea" id="RHEA:15469"/>
        <dbReference type="ChEBI" id="CHEBI:58435"/>
        <dbReference type="ChEBI" id="CHEBI:58525"/>
        <dbReference type="EC" id="5.3.1.16"/>
    </reaction>
</comment>
<comment type="pathway">
    <text evidence="1">Amino-acid biosynthesis; L-histidine biosynthesis; L-histidine from 5-phospho-alpha-D-ribose 1-diphosphate: step 4/9.</text>
</comment>
<comment type="subcellular location">
    <subcellularLocation>
        <location evidence="1">Cytoplasm</location>
    </subcellularLocation>
</comment>
<comment type="similarity">
    <text evidence="1">Belongs to the HisA/HisF family.</text>
</comment>
<name>HIS4_AROAE</name>
<feature type="chain" id="PRO_0000229041" description="1-(5-phosphoribosyl)-5-[(5-phosphoribosylamino)methylideneamino] imidazole-4-carboxamide isomerase">
    <location>
        <begin position="1"/>
        <end position="249"/>
    </location>
</feature>
<feature type="active site" description="Proton acceptor" evidence="1">
    <location>
        <position position="8"/>
    </location>
</feature>
<feature type="active site" description="Proton donor" evidence="1">
    <location>
        <position position="131"/>
    </location>
</feature>
<reference key="1">
    <citation type="journal article" date="2005" name="Arch. Microbiol.">
        <title>The genome sequence of an anaerobic aromatic-degrading denitrifying bacterium, strain EbN1.</title>
        <authorList>
            <person name="Rabus R."/>
            <person name="Kube M."/>
            <person name="Heider J."/>
            <person name="Beck A."/>
            <person name="Heitmann K."/>
            <person name="Widdel F."/>
            <person name="Reinhardt R."/>
        </authorList>
    </citation>
    <scope>NUCLEOTIDE SEQUENCE [LARGE SCALE GENOMIC DNA]</scope>
    <source>
        <strain>DSM 19018 / LMG 30748 / EbN1</strain>
    </source>
</reference>